<proteinExistence type="evidence at protein level"/>
<organism>
    <name type="scientific">Arabidopsis thaliana</name>
    <name type="common">Mouse-ear cress</name>
    <dbReference type="NCBI Taxonomy" id="3702"/>
    <lineage>
        <taxon>Eukaryota</taxon>
        <taxon>Viridiplantae</taxon>
        <taxon>Streptophyta</taxon>
        <taxon>Embryophyta</taxon>
        <taxon>Tracheophyta</taxon>
        <taxon>Spermatophyta</taxon>
        <taxon>Magnoliopsida</taxon>
        <taxon>eudicotyledons</taxon>
        <taxon>Gunneridae</taxon>
        <taxon>Pentapetalae</taxon>
        <taxon>rosids</taxon>
        <taxon>malvids</taxon>
        <taxon>Brassicales</taxon>
        <taxon>Brassicaceae</taxon>
        <taxon>Camelineae</taxon>
        <taxon>Arabidopsis</taxon>
    </lineage>
</organism>
<comment type="function">
    <text evidence="2">Catalyzes the two-step NADP-dependent conversion of GDP-4-dehydro-6-deoxy-D-mannose to GDP-fucose, involving an epimerase and a reductase reaction. Not involved in the synthesis of GDP-L-galactose from GDP-D-mannose.</text>
</comment>
<comment type="catalytic activity">
    <reaction evidence="2">
        <text>GDP-beta-L-fucose + NADP(+) = GDP-4-dehydro-alpha-D-rhamnose + NADPH + H(+)</text>
        <dbReference type="Rhea" id="RHEA:18885"/>
        <dbReference type="ChEBI" id="CHEBI:15378"/>
        <dbReference type="ChEBI" id="CHEBI:57273"/>
        <dbReference type="ChEBI" id="CHEBI:57783"/>
        <dbReference type="ChEBI" id="CHEBI:57964"/>
        <dbReference type="ChEBI" id="CHEBI:58349"/>
        <dbReference type="EC" id="1.1.1.271"/>
    </reaction>
</comment>
<comment type="pathway">
    <text>Nucleotide-sugar biosynthesis; GDP-L-fucose biosynthesis via de novo pathway; GDP-L-fucose from GDP-alpha-D-mannose: step 2/2.</text>
</comment>
<comment type="subunit">
    <text evidence="1">Binds and stabilizes MUR1. Homodimer (By similarity).</text>
</comment>
<comment type="tissue specificity">
    <text evidence="2">Highly expressed in roots and flowers, less abundant in leaves, stems and siliques.</text>
</comment>
<comment type="similarity">
    <text evidence="3">Belongs to the NAD(P)-dependent epimerase/dehydratase family. Fucose synthase subfamily.</text>
</comment>
<comment type="sequence caution" evidence="3">
    <conflict type="erroneous initiation">
        <sequence resource="EMBL-CDS" id="AAG52124"/>
    </conflict>
    <text>Truncated N-terminus.</text>
</comment>
<keyword id="KW-0007">Acetylation</keyword>
<keyword id="KW-0413">Isomerase</keyword>
<keyword id="KW-0511">Multifunctional enzyme</keyword>
<keyword id="KW-0521">NADP</keyword>
<keyword id="KW-0560">Oxidoreductase</keyword>
<keyword id="KW-1185">Reference proteome</keyword>
<evidence type="ECO:0000250" key="1"/>
<evidence type="ECO:0000269" key="2">
    <source>
    </source>
</evidence>
<evidence type="ECO:0000305" key="3"/>
<evidence type="ECO:0007744" key="4">
    <source>
    </source>
</evidence>
<accession>O49213</accession>
<accession>Q0WQ67</accession>
<dbReference type="EC" id="1.1.1.271" evidence="2"/>
<dbReference type="EMBL" id="AC010556">
    <property type="protein sequence ID" value="AAG52124.1"/>
    <property type="status" value="ALT_INIT"/>
    <property type="molecule type" value="Genomic_DNA"/>
</dbReference>
<dbReference type="EMBL" id="CP002684">
    <property type="protein sequence ID" value="AEE35434.1"/>
    <property type="molecule type" value="Genomic_DNA"/>
</dbReference>
<dbReference type="EMBL" id="AK228837">
    <property type="protein sequence ID" value="BAF00732.1"/>
    <property type="molecule type" value="mRNA"/>
</dbReference>
<dbReference type="EMBL" id="BT029480">
    <property type="protein sequence ID" value="ABL66737.1"/>
    <property type="molecule type" value="mRNA"/>
</dbReference>
<dbReference type="EMBL" id="AF045286">
    <property type="protein sequence ID" value="AAC02703.2"/>
    <property type="molecule type" value="Genomic_DNA"/>
</dbReference>
<dbReference type="EMBL" id="AB034806">
    <property type="protein sequence ID" value="BAA95670.1"/>
    <property type="molecule type" value="mRNA"/>
</dbReference>
<dbReference type="PIR" id="F96758">
    <property type="entry name" value="F96758"/>
</dbReference>
<dbReference type="RefSeq" id="NP_177468.2">
    <property type="nucleotide sequence ID" value="NM_105984.4"/>
</dbReference>
<dbReference type="SMR" id="O49213"/>
<dbReference type="BioGRID" id="28878">
    <property type="interactions" value="2"/>
</dbReference>
<dbReference type="FunCoup" id="O49213">
    <property type="interactions" value="2482"/>
</dbReference>
<dbReference type="IntAct" id="O49213">
    <property type="interactions" value="2"/>
</dbReference>
<dbReference type="STRING" id="3702.O49213"/>
<dbReference type="iPTMnet" id="O49213"/>
<dbReference type="PaxDb" id="3702-AT1G73250.1"/>
<dbReference type="ProteomicsDB" id="230834"/>
<dbReference type="EnsemblPlants" id="AT1G73250.1">
    <property type="protein sequence ID" value="AT1G73250.1"/>
    <property type="gene ID" value="AT1G73250"/>
</dbReference>
<dbReference type="GeneID" id="843659"/>
<dbReference type="Gramene" id="AT1G73250.1">
    <property type="protein sequence ID" value="AT1G73250.1"/>
    <property type="gene ID" value="AT1G73250"/>
</dbReference>
<dbReference type="KEGG" id="ath:AT1G73250"/>
<dbReference type="Araport" id="AT1G73250"/>
<dbReference type="TAIR" id="AT1G73250">
    <property type="gene designation" value="GER1"/>
</dbReference>
<dbReference type="eggNOG" id="KOG1431">
    <property type="taxonomic scope" value="Eukaryota"/>
</dbReference>
<dbReference type="HOGENOM" id="CLU_007383_18_0_1"/>
<dbReference type="InParanoid" id="O49213"/>
<dbReference type="OMA" id="EQWIFIS"/>
<dbReference type="BioCyc" id="ARA:AT1G73250-MONOMER"/>
<dbReference type="BioCyc" id="MetaCyc:AT1G73250-MONOMER"/>
<dbReference type="BRENDA" id="1.1.1.271">
    <property type="organism ID" value="399"/>
</dbReference>
<dbReference type="UniPathway" id="UPA00128">
    <property type="reaction ID" value="UER00191"/>
</dbReference>
<dbReference type="PRO" id="PR:O49213"/>
<dbReference type="Proteomes" id="UP000006548">
    <property type="component" value="Chromosome 1"/>
</dbReference>
<dbReference type="ExpressionAtlas" id="O49213">
    <property type="expression patterns" value="baseline and differential"/>
</dbReference>
<dbReference type="GO" id="GO:0050577">
    <property type="term" value="F:GDP-L-fucose synthase activity"/>
    <property type="evidence" value="ECO:0000314"/>
    <property type="project" value="TAIR"/>
</dbReference>
<dbReference type="GO" id="GO:0016853">
    <property type="term" value="F:isomerase activity"/>
    <property type="evidence" value="ECO:0007669"/>
    <property type="project" value="UniProtKB-KW"/>
</dbReference>
<dbReference type="GO" id="GO:0042351">
    <property type="term" value="P:'de novo' GDP-L-fucose biosynthetic process"/>
    <property type="evidence" value="ECO:0007669"/>
    <property type="project" value="UniProtKB-UniPathway"/>
</dbReference>
<dbReference type="GO" id="GO:0006005">
    <property type="term" value="P:L-fucose biosynthetic process"/>
    <property type="evidence" value="ECO:0000314"/>
    <property type="project" value="TAIR"/>
</dbReference>
<dbReference type="CDD" id="cd05239">
    <property type="entry name" value="GDP_FS_SDR_e"/>
    <property type="match status" value="1"/>
</dbReference>
<dbReference type="FunFam" id="3.40.50.720:FF:000101">
    <property type="entry name" value="GDP-L-fucose synthase"/>
    <property type="match status" value="1"/>
</dbReference>
<dbReference type="Gene3D" id="3.40.50.720">
    <property type="entry name" value="NAD(P)-binding Rossmann-like Domain"/>
    <property type="match status" value="1"/>
</dbReference>
<dbReference type="Gene3D" id="3.90.25.10">
    <property type="entry name" value="UDP-galactose 4-epimerase, domain 1"/>
    <property type="match status" value="1"/>
</dbReference>
<dbReference type="HAMAP" id="MF_00956">
    <property type="entry name" value="GDP_fucose_synth"/>
    <property type="match status" value="1"/>
</dbReference>
<dbReference type="InterPro" id="IPR001509">
    <property type="entry name" value="Epimerase_deHydtase"/>
</dbReference>
<dbReference type="InterPro" id="IPR028614">
    <property type="entry name" value="GDP_fucose/colitose_synth"/>
</dbReference>
<dbReference type="InterPro" id="IPR036291">
    <property type="entry name" value="NAD(P)-bd_dom_sf"/>
</dbReference>
<dbReference type="PANTHER" id="PTHR43238">
    <property type="entry name" value="GDP-L-FUCOSE SYNTHASE"/>
    <property type="match status" value="1"/>
</dbReference>
<dbReference type="PANTHER" id="PTHR43238:SF1">
    <property type="entry name" value="GDP-L-FUCOSE SYNTHASE"/>
    <property type="match status" value="1"/>
</dbReference>
<dbReference type="Pfam" id="PF01370">
    <property type="entry name" value="Epimerase"/>
    <property type="match status" value="1"/>
</dbReference>
<dbReference type="SUPFAM" id="SSF51735">
    <property type="entry name" value="NAD(P)-binding Rossmann-fold domains"/>
    <property type="match status" value="1"/>
</dbReference>
<name>FCL1_ARATH</name>
<sequence>MAETIGSEVSSMSDKSAKIFVAGHRGLVGSAIVRKLQEQGFTNLVLKTHAELDLTRQADVESFFSQEKPVYVILAAAKVGGIHANNTYPADFIGVNLQIQTNVIHSAYEHGVKKLLFLGSSCIYPKFAPQPIPESALLTASLEPTNEWYAIAKIAGIKTCQAYRIQHGWDAISGMPTNLYGPNDNFHPENSHVLPALMRRFHEAKVNGAEEVVVWGTGSPLREFLHVDDLADACVFLLDRYSGLEHVNIGSGQEVTIRELAELVKEVVGFEGKLGWDCTKPDGTPRKLMDSSKLASLGWTPKVSLRDGLSQTYDWYLKNVCNR</sequence>
<feature type="initiator methionine" description="Removed" evidence="4">
    <location>
        <position position="1"/>
    </location>
</feature>
<feature type="chain" id="PRO_0000174354" description="GDP-L-fucose synthase 1">
    <location>
        <begin position="2"/>
        <end position="323"/>
    </location>
</feature>
<feature type="active site" description="Proton donor/acceptor" evidence="1">
    <location>
        <position position="149"/>
    </location>
</feature>
<feature type="binding site" evidence="1">
    <location>
        <begin position="23"/>
        <end position="29"/>
    </location>
    <ligand>
        <name>NADP(+)</name>
        <dbReference type="ChEBI" id="CHEBI:58349"/>
    </ligand>
</feature>
<feature type="binding site" evidence="1">
    <location>
        <position position="153"/>
    </location>
    <ligand>
        <name>NADP(+)</name>
        <dbReference type="ChEBI" id="CHEBI:58349"/>
    </ligand>
</feature>
<feature type="binding site" evidence="1">
    <location>
        <begin position="176"/>
        <end position="179"/>
    </location>
    <ligand>
        <name>NADP(+)</name>
        <dbReference type="ChEBI" id="CHEBI:58349"/>
    </ligand>
</feature>
<feature type="binding site" evidence="1">
    <location>
        <position position="192"/>
    </location>
    <ligand>
        <name>NADP(+)</name>
        <dbReference type="ChEBI" id="CHEBI:58349"/>
    </ligand>
</feature>
<feature type="binding site" evidence="1">
    <location>
        <position position="200"/>
    </location>
    <ligand>
        <name>substrate</name>
    </ligand>
</feature>
<feature type="binding site" evidence="1">
    <location>
        <position position="215"/>
    </location>
    <ligand>
        <name>substrate</name>
    </ligand>
</feature>
<feature type="binding site" evidence="1">
    <location>
        <position position="222"/>
    </location>
    <ligand>
        <name>substrate</name>
    </ligand>
</feature>
<feature type="binding site" evidence="1">
    <location>
        <position position="282"/>
    </location>
    <ligand>
        <name>substrate</name>
    </ligand>
</feature>
<feature type="site" description="Important for catalytic activity" evidence="1">
    <location>
        <position position="120"/>
    </location>
</feature>
<feature type="site" description="Important for catalytic activity" evidence="1">
    <location>
        <position position="122"/>
    </location>
</feature>
<feature type="site" description="Lowers pKa of active site Tyr" evidence="1">
    <location>
        <position position="153"/>
    </location>
</feature>
<feature type="modified residue" description="N-acetylalanine" evidence="4">
    <location>
        <position position="2"/>
    </location>
</feature>
<gene>
    <name type="primary">GER1</name>
    <name type="synonym">FX</name>
    <name type="ordered locus">At1g73250</name>
    <name type="ORF">T18K17.8</name>
</gene>
<protein>
    <recommendedName>
        <fullName>GDP-L-fucose synthase 1</fullName>
        <ecNumber evidence="2">1.1.1.271</ecNumber>
    </recommendedName>
    <alternativeName>
        <fullName>GDP-4-keto-6-deoxy-D-mannose-3,5-epimerase-4-reductase 1</fullName>
        <shortName>AtFX</shortName>
        <shortName>AtGER1</shortName>
    </alternativeName>
</protein>
<reference key="1">
    <citation type="journal article" date="2000" name="Nature">
        <title>Sequence and analysis of chromosome 1 of the plant Arabidopsis thaliana.</title>
        <authorList>
            <person name="Theologis A."/>
            <person name="Ecker J.R."/>
            <person name="Palm C.J."/>
            <person name="Federspiel N.A."/>
            <person name="Kaul S."/>
            <person name="White O."/>
            <person name="Alonso J."/>
            <person name="Altafi H."/>
            <person name="Araujo R."/>
            <person name="Bowman C.L."/>
            <person name="Brooks S.Y."/>
            <person name="Buehler E."/>
            <person name="Chan A."/>
            <person name="Chao Q."/>
            <person name="Chen H."/>
            <person name="Cheuk R.F."/>
            <person name="Chin C.W."/>
            <person name="Chung M.K."/>
            <person name="Conn L."/>
            <person name="Conway A.B."/>
            <person name="Conway A.R."/>
            <person name="Creasy T.H."/>
            <person name="Dewar K."/>
            <person name="Dunn P."/>
            <person name="Etgu P."/>
            <person name="Feldblyum T.V."/>
            <person name="Feng J.-D."/>
            <person name="Fong B."/>
            <person name="Fujii C.Y."/>
            <person name="Gill J.E."/>
            <person name="Goldsmith A.D."/>
            <person name="Haas B."/>
            <person name="Hansen N.F."/>
            <person name="Hughes B."/>
            <person name="Huizar L."/>
            <person name="Hunter J.L."/>
            <person name="Jenkins J."/>
            <person name="Johnson-Hopson C."/>
            <person name="Khan S."/>
            <person name="Khaykin E."/>
            <person name="Kim C.J."/>
            <person name="Koo H.L."/>
            <person name="Kremenetskaia I."/>
            <person name="Kurtz D.B."/>
            <person name="Kwan A."/>
            <person name="Lam B."/>
            <person name="Langin-Hooper S."/>
            <person name="Lee A."/>
            <person name="Lee J.M."/>
            <person name="Lenz C.A."/>
            <person name="Li J.H."/>
            <person name="Li Y.-P."/>
            <person name="Lin X."/>
            <person name="Liu S.X."/>
            <person name="Liu Z.A."/>
            <person name="Luros J.S."/>
            <person name="Maiti R."/>
            <person name="Marziali A."/>
            <person name="Militscher J."/>
            <person name="Miranda M."/>
            <person name="Nguyen M."/>
            <person name="Nierman W.C."/>
            <person name="Osborne B.I."/>
            <person name="Pai G."/>
            <person name="Peterson J."/>
            <person name="Pham P.K."/>
            <person name="Rizzo M."/>
            <person name="Rooney T."/>
            <person name="Rowley D."/>
            <person name="Sakano H."/>
            <person name="Salzberg S.L."/>
            <person name="Schwartz J.R."/>
            <person name="Shinn P."/>
            <person name="Southwick A.M."/>
            <person name="Sun H."/>
            <person name="Tallon L.J."/>
            <person name="Tambunga G."/>
            <person name="Toriumi M.J."/>
            <person name="Town C.D."/>
            <person name="Utterback T."/>
            <person name="Van Aken S."/>
            <person name="Vaysberg M."/>
            <person name="Vysotskaia V.S."/>
            <person name="Walker M."/>
            <person name="Wu D."/>
            <person name="Yu G."/>
            <person name="Fraser C.M."/>
            <person name="Venter J.C."/>
            <person name="Davis R.W."/>
        </authorList>
    </citation>
    <scope>NUCLEOTIDE SEQUENCE [LARGE SCALE GENOMIC DNA]</scope>
    <source>
        <strain>cv. Columbia</strain>
    </source>
</reference>
<reference key="2">
    <citation type="journal article" date="2017" name="Plant J.">
        <title>Araport11: a complete reannotation of the Arabidopsis thaliana reference genome.</title>
        <authorList>
            <person name="Cheng C.Y."/>
            <person name="Krishnakumar V."/>
            <person name="Chan A.P."/>
            <person name="Thibaud-Nissen F."/>
            <person name="Schobel S."/>
            <person name="Town C.D."/>
        </authorList>
    </citation>
    <scope>GENOME REANNOTATION</scope>
    <source>
        <strain>cv. Columbia</strain>
    </source>
</reference>
<reference key="3">
    <citation type="submission" date="2006-07" db="EMBL/GenBank/DDBJ databases">
        <title>Large-scale analysis of RIKEN Arabidopsis full-length (RAFL) cDNAs.</title>
        <authorList>
            <person name="Totoki Y."/>
            <person name="Seki M."/>
            <person name="Ishida J."/>
            <person name="Nakajima M."/>
            <person name="Enju A."/>
            <person name="Kamiya A."/>
            <person name="Narusaka M."/>
            <person name="Shin-i T."/>
            <person name="Nakagawa M."/>
            <person name="Sakamoto N."/>
            <person name="Oishi K."/>
            <person name="Kohara Y."/>
            <person name="Kobayashi M."/>
            <person name="Toyoda A."/>
            <person name="Sakaki Y."/>
            <person name="Sakurai T."/>
            <person name="Iida K."/>
            <person name="Akiyama K."/>
            <person name="Satou M."/>
            <person name="Toyoda T."/>
            <person name="Konagaya A."/>
            <person name="Carninci P."/>
            <person name="Kawai J."/>
            <person name="Hayashizaki Y."/>
            <person name="Shinozaki K."/>
        </authorList>
    </citation>
    <scope>NUCLEOTIDE SEQUENCE [LARGE SCALE MRNA]</scope>
    <source>
        <strain>cv. Columbia</strain>
    </source>
</reference>
<reference key="4">
    <citation type="submission" date="2006-12" db="EMBL/GenBank/DDBJ databases">
        <title>Arabidopsis ORF clones.</title>
        <authorList>
            <person name="Bautista V.R."/>
            <person name="Kim C.J."/>
            <person name="Chen H."/>
            <person name="Quinitio C."/>
            <person name="Ecker J.R."/>
        </authorList>
    </citation>
    <scope>NUCLEOTIDE SEQUENCE [LARGE SCALE MRNA]</scope>
    <source>
        <strain>cv. Columbia</strain>
    </source>
</reference>
<reference key="5">
    <citation type="journal article" date="2000" name="Plant J.">
        <title>A bifunctional epimerase-reductase acts downstream of the MUR1 gene product and completes the de novo synthesis of GDP-L-fucose in Arabidopsis.</title>
        <authorList>
            <person name="Bonin C.P."/>
            <person name="Reiter W.-D."/>
        </authorList>
    </citation>
    <scope>NUCLEOTIDE SEQUENCE [GENOMIC DNA] OF 12-323</scope>
    <scope>TISSUE SPECIFICITY</scope>
    <scope>FUNCTION</scope>
    <scope>CATALYTIC ACTIVITY</scope>
</reference>
<reference key="6">
    <citation type="journal article" date="2003" name="Glycobiology">
        <title>Interaction of GDP-4-keto-6-deoxymannose-3,5-epimerase-4-reductase with GDP-mannose-4,6-dehydratase stabilizes the enzyme activity for formation of GDP-fucose from GDP-mannose.</title>
        <authorList>
            <person name="Nakayama K."/>
            <person name="Maeda Y."/>
            <person name="Jigami Y."/>
        </authorList>
    </citation>
    <scope>NUCLEOTIDE SEQUENCE [MRNA] OF 12-323</scope>
    <scope>INTERACTION WITH MUR1</scope>
</reference>
<reference key="7">
    <citation type="journal article" date="2012" name="Mol. Cell. Proteomics">
        <title>Comparative large-scale characterisation of plant vs. mammal proteins reveals similar and idiosyncratic N-alpha acetylation features.</title>
        <authorList>
            <person name="Bienvenut W.V."/>
            <person name="Sumpton D."/>
            <person name="Martinez A."/>
            <person name="Lilla S."/>
            <person name="Espagne C."/>
            <person name="Meinnel T."/>
            <person name="Giglione C."/>
        </authorList>
    </citation>
    <scope>ACETYLATION [LARGE SCALE ANALYSIS] AT ALA-2</scope>
    <scope>CLEAVAGE OF INITIATOR METHIONINE [LARGE SCALE ANALYSIS]</scope>
    <scope>IDENTIFICATION BY MASS SPECTROMETRY [LARGE SCALE ANALYSIS]</scope>
</reference>